<evidence type="ECO:0000255" key="1">
    <source>
        <dbReference type="HAMAP-Rule" id="MF_01345"/>
    </source>
</evidence>
<evidence type="ECO:0000305" key="2"/>
<accession>B3R000</accession>
<protein>
    <recommendedName>
        <fullName evidence="1">Small ribosomal subunit protein uS17</fullName>
    </recommendedName>
    <alternativeName>
        <fullName evidence="2">30S ribosomal protein S17</fullName>
    </alternativeName>
</protein>
<reference key="1">
    <citation type="journal article" date="2008" name="BMC Genomics">
        <title>The linear chromosome of the plant-pathogenic mycoplasma 'Candidatus Phytoplasma mali'.</title>
        <authorList>
            <person name="Kube M."/>
            <person name="Schneider B."/>
            <person name="Kuhl H."/>
            <person name="Dandekar T."/>
            <person name="Heitmann K."/>
            <person name="Migdoll A.M."/>
            <person name="Reinhardt R."/>
            <person name="Seemueller E."/>
        </authorList>
    </citation>
    <scope>NUCLEOTIDE SEQUENCE [LARGE SCALE GENOMIC DNA]</scope>
    <source>
        <strain>AT</strain>
    </source>
</reference>
<dbReference type="EMBL" id="CU469464">
    <property type="protein sequence ID" value="CAP18537.1"/>
    <property type="molecule type" value="Genomic_DNA"/>
</dbReference>
<dbReference type="SMR" id="B3R000"/>
<dbReference type="STRING" id="37692.ATP_00350"/>
<dbReference type="KEGG" id="pml:ATP_00350"/>
<dbReference type="eggNOG" id="COG0186">
    <property type="taxonomic scope" value="Bacteria"/>
</dbReference>
<dbReference type="HOGENOM" id="CLU_073626_1_0_14"/>
<dbReference type="Proteomes" id="UP000002020">
    <property type="component" value="Chromosome"/>
</dbReference>
<dbReference type="GO" id="GO:0022627">
    <property type="term" value="C:cytosolic small ribosomal subunit"/>
    <property type="evidence" value="ECO:0007669"/>
    <property type="project" value="TreeGrafter"/>
</dbReference>
<dbReference type="GO" id="GO:0019843">
    <property type="term" value="F:rRNA binding"/>
    <property type="evidence" value="ECO:0007669"/>
    <property type="project" value="UniProtKB-UniRule"/>
</dbReference>
<dbReference type="GO" id="GO:0003735">
    <property type="term" value="F:structural constituent of ribosome"/>
    <property type="evidence" value="ECO:0007669"/>
    <property type="project" value="InterPro"/>
</dbReference>
<dbReference type="GO" id="GO:0006412">
    <property type="term" value="P:translation"/>
    <property type="evidence" value="ECO:0007669"/>
    <property type="project" value="UniProtKB-UniRule"/>
</dbReference>
<dbReference type="CDD" id="cd00364">
    <property type="entry name" value="Ribosomal_uS17"/>
    <property type="match status" value="1"/>
</dbReference>
<dbReference type="Gene3D" id="2.40.50.140">
    <property type="entry name" value="Nucleic acid-binding proteins"/>
    <property type="match status" value="1"/>
</dbReference>
<dbReference type="HAMAP" id="MF_01345_B">
    <property type="entry name" value="Ribosomal_uS17_B"/>
    <property type="match status" value="1"/>
</dbReference>
<dbReference type="InterPro" id="IPR012340">
    <property type="entry name" value="NA-bd_OB-fold"/>
</dbReference>
<dbReference type="InterPro" id="IPR000266">
    <property type="entry name" value="Ribosomal_uS17"/>
</dbReference>
<dbReference type="InterPro" id="IPR019984">
    <property type="entry name" value="Ribosomal_uS17_bact/chlr"/>
</dbReference>
<dbReference type="NCBIfam" id="NF004123">
    <property type="entry name" value="PRK05610.1"/>
    <property type="match status" value="1"/>
</dbReference>
<dbReference type="NCBIfam" id="TIGR03635">
    <property type="entry name" value="uS17_bact"/>
    <property type="match status" value="1"/>
</dbReference>
<dbReference type="PANTHER" id="PTHR10744">
    <property type="entry name" value="40S RIBOSOMAL PROTEIN S11 FAMILY MEMBER"/>
    <property type="match status" value="1"/>
</dbReference>
<dbReference type="PANTHER" id="PTHR10744:SF1">
    <property type="entry name" value="SMALL RIBOSOMAL SUBUNIT PROTEIN US17M"/>
    <property type="match status" value="1"/>
</dbReference>
<dbReference type="Pfam" id="PF00366">
    <property type="entry name" value="Ribosomal_S17"/>
    <property type="match status" value="1"/>
</dbReference>
<dbReference type="PRINTS" id="PR00973">
    <property type="entry name" value="RIBOSOMALS17"/>
</dbReference>
<dbReference type="SUPFAM" id="SSF50249">
    <property type="entry name" value="Nucleic acid-binding proteins"/>
    <property type="match status" value="1"/>
</dbReference>
<sequence>MLRNSRKIFTGNVVSDKMNKTITVVVNVYKKDLLYGKIVKKSRKFYVHDETEKAKKGNLISFMETRPLSKTKKFRLLKIIFSNDKDKKQ</sequence>
<proteinExistence type="inferred from homology"/>
<organism>
    <name type="scientific">Phytoplasma mali (strain AT)</name>
    <dbReference type="NCBI Taxonomy" id="482235"/>
    <lineage>
        <taxon>Bacteria</taxon>
        <taxon>Bacillati</taxon>
        <taxon>Mycoplasmatota</taxon>
        <taxon>Mollicutes</taxon>
        <taxon>Acholeplasmatales</taxon>
        <taxon>Acholeplasmataceae</taxon>
        <taxon>Candidatus Phytoplasma</taxon>
        <taxon>16SrX (Apple proliferation group)</taxon>
    </lineage>
</organism>
<keyword id="KW-1185">Reference proteome</keyword>
<keyword id="KW-0687">Ribonucleoprotein</keyword>
<keyword id="KW-0689">Ribosomal protein</keyword>
<keyword id="KW-0694">RNA-binding</keyword>
<keyword id="KW-0699">rRNA-binding</keyword>
<name>RS17_PHYMT</name>
<gene>
    <name evidence="1" type="primary">rpsQ</name>
    <name type="ordered locus">ATP_00350</name>
</gene>
<feature type="chain" id="PRO_1000166490" description="Small ribosomal subunit protein uS17">
    <location>
        <begin position="1"/>
        <end position="89"/>
    </location>
</feature>
<comment type="function">
    <text evidence="1">One of the primary rRNA binding proteins, it binds specifically to the 5'-end of 16S ribosomal RNA.</text>
</comment>
<comment type="subunit">
    <text evidence="1">Part of the 30S ribosomal subunit.</text>
</comment>
<comment type="similarity">
    <text evidence="1">Belongs to the universal ribosomal protein uS17 family.</text>
</comment>